<comment type="function">
    <text>Produces developmental and stress-related release of hydrogen peroxide in the apoplast. May play an important role in several aspects of plant growth and defense mechanisms.</text>
</comment>
<comment type="catalytic activity">
    <reaction>
        <text>oxalate + O2 + 2 H(+) = H2O2 + 2 CO2</text>
        <dbReference type="Rhea" id="RHEA:21880"/>
        <dbReference type="ChEBI" id="CHEBI:15378"/>
        <dbReference type="ChEBI" id="CHEBI:15379"/>
        <dbReference type="ChEBI" id="CHEBI:16240"/>
        <dbReference type="ChEBI" id="CHEBI:16526"/>
        <dbReference type="ChEBI" id="CHEBI:30623"/>
        <dbReference type="EC" id="1.2.3.4"/>
    </reaction>
</comment>
<comment type="subunit">
    <text evidence="1">Oligomer (believed to be a pentamer but probably hexamer).</text>
</comment>
<comment type="subcellular location">
    <subcellularLocation>
        <location>Secreted</location>
        <location>Extracellular space</location>
        <location>Apoplast</location>
    </subcellularLocation>
    <subcellularLocation>
        <location>Cytoplasm</location>
    </subcellularLocation>
    <subcellularLocation>
        <location>Secreted</location>
        <location>Cell wall</location>
    </subcellularLocation>
    <text>Found in the apoplast and the cytoplasm of germinating embryo cells. Associated with the cell wall.</text>
</comment>
<comment type="miscellaneous">
    <text>Associated mostly with highly substituted forms of glucuronogalactoarabinoxylans.</text>
</comment>
<comment type="similarity">
    <text evidence="3">Belongs to the germin family.</text>
</comment>
<reference key="1">
    <citation type="journal article" date="1991" name="J. Biol. Chem.">
        <title>Homologies between members of the germin gene family in hexaploid wheat and similarities between these wheat germins and certain Physarum spherulins.</title>
        <authorList>
            <person name="Lane B.G."/>
            <person name="Bernier F."/>
            <person name="Dratewka-Kos E."/>
            <person name="Shafai R."/>
            <person name="Kennedy T.D."/>
            <person name="Pyne C."/>
            <person name="Munro J.R."/>
            <person name="Vaughan T."/>
            <person name="Walters D."/>
            <person name="Altomare F."/>
        </authorList>
    </citation>
    <scope>NUCLEOTIDE SEQUENCE [GENOMIC DNA]</scope>
</reference>
<reference key="2">
    <citation type="journal article" date="1993" name="J. Biol. Chem.">
        <title>Germin, a protein marker of early plant development, is an oxalate oxidase.</title>
        <authorList>
            <person name="Lane B.G."/>
            <person name="Dunwell J.M."/>
            <person name="Ray J.A."/>
            <person name="Schmitt M.R."/>
            <person name="Cuming A.C."/>
        </authorList>
    </citation>
    <scope>CHARACTERIZATION</scope>
</reference>
<proteinExistence type="evidence at protein level"/>
<feature type="signal peptide" evidence="2">
    <location>
        <begin position="1"/>
        <end position="23"/>
    </location>
</feature>
<feature type="chain" id="PRO_0000010835" description="Oxalate oxidase GF-3.8">
    <location>
        <begin position="24"/>
        <end position="224"/>
    </location>
</feature>
<feature type="domain" description="Cupin type-1" evidence="2">
    <location>
        <begin position="63"/>
        <end position="214"/>
    </location>
</feature>
<feature type="binding site" evidence="1">
    <location>
        <position position="111"/>
    </location>
    <ligand>
        <name>Mn(2+)</name>
        <dbReference type="ChEBI" id="CHEBI:29035"/>
    </ligand>
</feature>
<feature type="binding site" evidence="1">
    <location>
        <position position="113"/>
    </location>
    <ligand>
        <name>Mn(2+)</name>
        <dbReference type="ChEBI" id="CHEBI:29035"/>
    </ligand>
</feature>
<feature type="binding site" evidence="1">
    <location>
        <position position="118"/>
    </location>
    <ligand>
        <name>Mn(2+)</name>
        <dbReference type="ChEBI" id="CHEBI:29035"/>
    </ligand>
</feature>
<feature type="binding site" evidence="1">
    <location>
        <position position="160"/>
    </location>
    <ligand>
        <name>Mn(2+)</name>
        <dbReference type="ChEBI" id="CHEBI:29035"/>
    </ligand>
</feature>
<feature type="glycosylation site" description="N-linked (GlcNAc...) asparagine" evidence="2">
    <location>
        <position position="70"/>
    </location>
</feature>
<feature type="glycosylation site" description="N-linked (GlcNAc...) asparagine" evidence="2">
    <location>
        <position position="75"/>
    </location>
</feature>
<feature type="disulfide bond" evidence="1">
    <location>
        <begin position="33"/>
        <end position="49"/>
    </location>
</feature>
<dbReference type="EC" id="1.2.3.4"/>
<dbReference type="EMBL" id="M63224">
    <property type="protein sequence ID" value="AAA34271.1"/>
    <property type="molecule type" value="Genomic_DNA"/>
</dbReference>
<dbReference type="RefSeq" id="XP_044372265.1">
    <property type="nucleotide sequence ID" value="XM_044516330.1"/>
</dbReference>
<dbReference type="SMR" id="P26759"/>
<dbReference type="STRING" id="4565.P26759"/>
<dbReference type="EnsemblPlants" id="TraesARI4B03G02271230.1">
    <property type="protein sequence ID" value="TraesARI4B03G02271230.1.CDS1"/>
    <property type="gene ID" value="TraesARI4B03G02271230"/>
</dbReference>
<dbReference type="EnsemblPlants" id="TraesCLE_scaffold_039871_01G000100.1">
    <property type="protein sequence ID" value="TraesCLE_scaffold_039871_01G000100.1"/>
    <property type="gene ID" value="TraesCLE_scaffold_039871_01G000100"/>
</dbReference>
<dbReference type="EnsemblPlants" id="TraesCS4B02G033200.1">
    <property type="protein sequence ID" value="TraesCS4B02G033200.1.cds1"/>
    <property type="gene ID" value="TraesCS4B02G033200"/>
</dbReference>
<dbReference type="EnsemblPlants" id="TraesCS4B03G0073300.1">
    <property type="protein sequence ID" value="TraesCS4B03G0073300.1.CDS1"/>
    <property type="gene ID" value="TraesCS4B03G0073300"/>
</dbReference>
<dbReference type="EnsemblPlants" id="TraesJAG4B03G02234010.1">
    <property type="protein sequence ID" value="TraesJAG4B03G02234010.1.CDS1"/>
    <property type="gene ID" value="TraesJAG4B03G02234010"/>
</dbReference>
<dbReference type="EnsemblPlants" id="TraesJUL4B03G02255270.1">
    <property type="protein sequence ID" value="TraesJUL4B03G02255270.1.CDS1"/>
    <property type="gene ID" value="TraesJUL4B03G02255270"/>
</dbReference>
<dbReference type="EnsemblPlants" id="TraesKAR4B01G0016750.1">
    <property type="protein sequence ID" value="cds.TraesKAR4B01G0016750.1"/>
    <property type="gene ID" value="TraesKAR4B01G0016750"/>
</dbReference>
<dbReference type="EnsemblPlants" id="TraesLAC4B03G02188470.1">
    <property type="protein sequence ID" value="TraesLAC4B03G02188470.1.CDS1"/>
    <property type="gene ID" value="TraesLAC4B03G02188470"/>
</dbReference>
<dbReference type="EnsemblPlants" id="TraesLDM4B03G02234440.1">
    <property type="protein sequence ID" value="TraesLDM4B03G02234440.1.CDS1"/>
    <property type="gene ID" value="TraesLDM4B03G02234440"/>
</dbReference>
<dbReference type="EnsemblPlants" id="TraesNOR4B03G02251550.1">
    <property type="protein sequence ID" value="TraesNOR4B03G02251550.1.CDS1"/>
    <property type="gene ID" value="TraesNOR4B03G02251550"/>
</dbReference>
<dbReference type="EnsemblPlants" id="TraesPARA_EIv1.0_1314200.1">
    <property type="protein sequence ID" value="TraesPARA_EIv1.0_1314200.1.CDS1"/>
    <property type="gene ID" value="TraesPARA_EIv1.0_1314200"/>
</dbReference>
<dbReference type="EnsemblPlants" id="TraesRN4B0100074600.1">
    <property type="protein sequence ID" value="TraesRN4B0100074600.1"/>
    <property type="gene ID" value="TraesRN4B0100074600"/>
</dbReference>
<dbReference type="EnsemblPlants" id="TraesROB_scaffold_092809_01G000200.1">
    <property type="protein sequence ID" value="TraesROB_scaffold_092809_01G000200.1"/>
    <property type="gene ID" value="TraesROB_scaffold_092809_01G000200"/>
</dbReference>
<dbReference type="EnsemblPlants" id="TraesSYM4B03G02260780.1">
    <property type="protein sequence ID" value="TraesSYM4B03G02260780.1.CDS1"/>
    <property type="gene ID" value="TraesSYM4B03G02260780"/>
</dbReference>
<dbReference type="EnsemblPlants" id="TraesWEE_scaffold_033334_01G000100.1">
    <property type="protein sequence ID" value="TraesWEE_scaffold_033334_01G000100.1"/>
    <property type="gene ID" value="TraesWEE_scaffold_033334_01G000100"/>
</dbReference>
<dbReference type="GeneID" id="123094288"/>
<dbReference type="Gramene" id="TraesARI4B03G02271230.1">
    <property type="protein sequence ID" value="TraesARI4B03G02271230.1.CDS1"/>
    <property type="gene ID" value="TraesARI4B03G02271230"/>
</dbReference>
<dbReference type="Gramene" id="TraesCLE_scaffold_039871_01G000100.1">
    <property type="protein sequence ID" value="TraesCLE_scaffold_039871_01G000100.1"/>
    <property type="gene ID" value="TraesCLE_scaffold_039871_01G000100"/>
</dbReference>
<dbReference type="Gramene" id="TraesCS4B02G033200.1">
    <property type="protein sequence ID" value="TraesCS4B02G033200.1.cds1"/>
    <property type="gene ID" value="TraesCS4B02G033200"/>
</dbReference>
<dbReference type="Gramene" id="TraesCS4B03G0073300.1">
    <property type="protein sequence ID" value="TraesCS4B03G0073300.1.CDS1"/>
    <property type="gene ID" value="TraesCS4B03G0073300"/>
</dbReference>
<dbReference type="Gramene" id="TraesJAG4B03G02234010.1">
    <property type="protein sequence ID" value="TraesJAG4B03G02234010.1.CDS1"/>
    <property type="gene ID" value="TraesJAG4B03G02234010"/>
</dbReference>
<dbReference type="Gramene" id="TraesJUL4B03G02255270.1">
    <property type="protein sequence ID" value="TraesJUL4B03G02255270.1.CDS1"/>
    <property type="gene ID" value="TraesJUL4B03G02255270"/>
</dbReference>
<dbReference type="Gramene" id="TraesKAR4B01G0016750.1">
    <property type="protein sequence ID" value="cds.TraesKAR4B01G0016750.1"/>
    <property type="gene ID" value="TraesKAR4B01G0016750"/>
</dbReference>
<dbReference type="Gramene" id="TraesLAC4B03G02188470.1">
    <property type="protein sequence ID" value="TraesLAC4B03G02188470.1.CDS1"/>
    <property type="gene ID" value="TraesLAC4B03G02188470"/>
</dbReference>
<dbReference type="Gramene" id="TraesLDM4B03G02234440.1">
    <property type="protein sequence ID" value="TraesLDM4B03G02234440.1.CDS1"/>
    <property type="gene ID" value="TraesLDM4B03G02234440"/>
</dbReference>
<dbReference type="Gramene" id="TraesNOR4B03G02251550.1">
    <property type="protein sequence ID" value="TraesNOR4B03G02251550.1.CDS1"/>
    <property type="gene ID" value="TraesNOR4B03G02251550"/>
</dbReference>
<dbReference type="Gramene" id="TraesPARA_EIv1.0_1314200.1">
    <property type="protein sequence ID" value="TraesPARA_EIv1.0_1314200.1.CDS1"/>
    <property type="gene ID" value="TraesPARA_EIv1.0_1314200"/>
</dbReference>
<dbReference type="Gramene" id="TraesRN4B0100074600.1">
    <property type="protein sequence ID" value="TraesRN4B0100074600.1"/>
    <property type="gene ID" value="TraesRN4B0100074600"/>
</dbReference>
<dbReference type="Gramene" id="TraesROB_scaffold_092809_01G000200.1">
    <property type="protein sequence ID" value="TraesROB_scaffold_092809_01G000200.1"/>
    <property type="gene ID" value="TraesROB_scaffold_092809_01G000200"/>
</dbReference>
<dbReference type="Gramene" id="TraesSYM4B03G02260780.1">
    <property type="protein sequence ID" value="TraesSYM4B03G02260780.1.CDS1"/>
    <property type="gene ID" value="TraesSYM4B03G02260780"/>
</dbReference>
<dbReference type="Gramene" id="TraesWEE_scaffold_033334_01G000100.1">
    <property type="protein sequence ID" value="TraesWEE_scaffold_033334_01G000100.1"/>
    <property type="gene ID" value="TraesWEE_scaffold_033334_01G000100"/>
</dbReference>
<dbReference type="OrthoDB" id="635918at2759"/>
<dbReference type="Proteomes" id="UP000019116">
    <property type="component" value="Chromosome 4B"/>
</dbReference>
<dbReference type="GO" id="GO:0048046">
    <property type="term" value="C:apoplast"/>
    <property type="evidence" value="ECO:0007669"/>
    <property type="project" value="UniProtKB-SubCell"/>
</dbReference>
<dbReference type="GO" id="GO:0005737">
    <property type="term" value="C:cytoplasm"/>
    <property type="evidence" value="ECO:0007669"/>
    <property type="project" value="UniProtKB-SubCell"/>
</dbReference>
<dbReference type="GO" id="GO:0030145">
    <property type="term" value="F:manganese ion binding"/>
    <property type="evidence" value="ECO:0007669"/>
    <property type="project" value="InterPro"/>
</dbReference>
<dbReference type="GO" id="GO:0050162">
    <property type="term" value="F:oxalate oxidase activity"/>
    <property type="evidence" value="ECO:0007669"/>
    <property type="project" value="UniProtKB-EC"/>
</dbReference>
<dbReference type="CDD" id="cd02241">
    <property type="entry name" value="cupin_OxOx"/>
    <property type="match status" value="1"/>
</dbReference>
<dbReference type="FunFam" id="2.60.120.10:FF:000005">
    <property type="entry name" value="Germin-like protein subfamily 1 member 8"/>
    <property type="match status" value="1"/>
</dbReference>
<dbReference type="Gene3D" id="2.60.120.10">
    <property type="entry name" value="Jelly Rolls"/>
    <property type="match status" value="1"/>
</dbReference>
<dbReference type="InterPro" id="IPR006045">
    <property type="entry name" value="Cupin_1"/>
</dbReference>
<dbReference type="InterPro" id="IPR001929">
    <property type="entry name" value="Germin"/>
</dbReference>
<dbReference type="InterPro" id="IPR019780">
    <property type="entry name" value="Germin_Mn-BS"/>
</dbReference>
<dbReference type="InterPro" id="IPR014710">
    <property type="entry name" value="RmlC-like_jellyroll"/>
</dbReference>
<dbReference type="InterPro" id="IPR011051">
    <property type="entry name" value="RmlC_Cupin_sf"/>
</dbReference>
<dbReference type="PANTHER" id="PTHR31238">
    <property type="entry name" value="GERMIN-LIKE PROTEIN SUBFAMILY 3 MEMBER 3"/>
    <property type="match status" value="1"/>
</dbReference>
<dbReference type="Pfam" id="PF00190">
    <property type="entry name" value="Cupin_1"/>
    <property type="match status" value="1"/>
</dbReference>
<dbReference type="PRINTS" id="PR00325">
    <property type="entry name" value="GERMIN"/>
</dbReference>
<dbReference type="SMART" id="SM00835">
    <property type="entry name" value="Cupin_1"/>
    <property type="match status" value="1"/>
</dbReference>
<dbReference type="SUPFAM" id="SSF51182">
    <property type="entry name" value="RmlC-like cupins"/>
    <property type="match status" value="1"/>
</dbReference>
<dbReference type="PROSITE" id="PS00725">
    <property type="entry name" value="GERMIN"/>
    <property type="match status" value="1"/>
</dbReference>
<organism>
    <name type="scientific">Triticum aestivum</name>
    <name type="common">Wheat</name>
    <dbReference type="NCBI Taxonomy" id="4565"/>
    <lineage>
        <taxon>Eukaryota</taxon>
        <taxon>Viridiplantae</taxon>
        <taxon>Streptophyta</taxon>
        <taxon>Embryophyta</taxon>
        <taxon>Tracheophyta</taxon>
        <taxon>Spermatophyta</taxon>
        <taxon>Magnoliopsida</taxon>
        <taxon>Liliopsida</taxon>
        <taxon>Poales</taxon>
        <taxon>Poaceae</taxon>
        <taxon>BOP clade</taxon>
        <taxon>Pooideae</taxon>
        <taxon>Triticodae</taxon>
        <taxon>Triticeae</taxon>
        <taxon>Triticinae</taxon>
        <taxon>Triticum</taxon>
    </lineage>
</organism>
<sequence>MGYSKNIASGMFAMLLLASAVLSSNPHPLQDFCVADLDGKAVSVNGHMCKPMSEAGDDFLFSSKLAKAGNTSTPNGSAVTDLNVAEWPGTNTLGVSMNRVDFAPGGTNPPHIHPRATEIGIVMKGELLVGILGSLDSGNKLYSRVVRAGETFLIPRGLMHFQFNVGKTEASMVVFFNSQSPSVVFVPLTLFGSNPPIPKPVLTKALRVEAGVVELLKSKFAGGS</sequence>
<protein>
    <recommendedName>
        <fullName>Oxalate oxidase GF-3.8</fullName>
        <ecNumber>1.2.3.4</ecNumber>
    </recommendedName>
    <alternativeName>
        <fullName>Germin GF-3.8</fullName>
    </alternativeName>
</protein>
<evidence type="ECO:0000250" key="1"/>
<evidence type="ECO:0000255" key="2"/>
<evidence type="ECO:0000305" key="3"/>
<keyword id="KW-0052">Apoplast</keyword>
<keyword id="KW-0134">Cell wall</keyword>
<keyword id="KW-0963">Cytoplasm</keyword>
<keyword id="KW-1015">Disulfide bond</keyword>
<keyword id="KW-0325">Glycoprotein</keyword>
<keyword id="KW-0464">Manganese</keyword>
<keyword id="KW-0479">Metal-binding</keyword>
<keyword id="KW-0560">Oxidoreductase</keyword>
<keyword id="KW-1185">Reference proteome</keyword>
<keyword id="KW-0964">Secreted</keyword>
<keyword id="KW-0732">Signal</keyword>
<accession>P26759</accession>
<name>GER3_WHEAT</name>